<protein>
    <recommendedName>
        <fullName evidence="1">Holliday junction branch migration complex subunit RuvA</fullName>
    </recommendedName>
</protein>
<gene>
    <name evidence="1" type="primary">ruvA</name>
    <name type="ordered locus">CLD_1469</name>
</gene>
<proteinExistence type="inferred from homology"/>
<accession>B1IMF4</accession>
<sequence length="197" mass="22229">MYEYIKGKYIDMYKDYIVIENNNIGYKIYTSGSTMAKLPSIGENIMLYTEQIVREDFIGVYGFLTKDELSMFKLLLTINGVGAKASLSLLSISNVSTLKYAIKMGDEKTITRAPGIGKKTAQRIILELKDKIEIDILEEDDEQIINKVTDDKKVLEAVAALVTLGYSEKEANKVINSCDKNNSLEQIIKEALKYLMK</sequence>
<evidence type="ECO:0000255" key="1">
    <source>
        <dbReference type="HAMAP-Rule" id="MF_00031"/>
    </source>
</evidence>
<organism>
    <name type="scientific">Clostridium botulinum (strain Okra / Type B1)</name>
    <dbReference type="NCBI Taxonomy" id="498213"/>
    <lineage>
        <taxon>Bacteria</taxon>
        <taxon>Bacillati</taxon>
        <taxon>Bacillota</taxon>
        <taxon>Clostridia</taxon>
        <taxon>Eubacteriales</taxon>
        <taxon>Clostridiaceae</taxon>
        <taxon>Clostridium</taxon>
    </lineage>
</organism>
<comment type="function">
    <text evidence="1">The RuvA-RuvB-RuvC complex processes Holliday junction (HJ) DNA during genetic recombination and DNA repair, while the RuvA-RuvB complex plays an important role in the rescue of blocked DNA replication forks via replication fork reversal (RFR). RuvA specifically binds to HJ cruciform DNA, conferring on it an open structure. The RuvB hexamer acts as an ATP-dependent pump, pulling dsDNA into and through the RuvAB complex. HJ branch migration allows RuvC to scan DNA until it finds its consensus sequence, where it cleaves and resolves the cruciform DNA.</text>
</comment>
<comment type="subunit">
    <text evidence="1">Homotetramer. Forms an RuvA(8)-RuvB(12)-Holliday junction (HJ) complex. HJ DNA is sandwiched between 2 RuvA tetramers; dsDNA enters through RuvA and exits via RuvB. An RuvB hexamer assembles on each DNA strand where it exits the tetramer. Each RuvB hexamer is contacted by two RuvA subunits (via domain III) on 2 adjacent RuvB subunits; this complex drives branch migration. In the full resolvosome a probable DNA-RuvA(4)-RuvB(12)-RuvC(2) complex forms which resolves the HJ.</text>
</comment>
<comment type="subcellular location">
    <subcellularLocation>
        <location evidence="1">Cytoplasm</location>
    </subcellularLocation>
</comment>
<comment type="domain">
    <text evidence="1">Has three domains with a flexible linker between the domains II and III and assumes an 'L' shape. Domain III is highly mobile and contacts RuvB.</text>
</comment>
<comment type="similarity">
    <text evidence="1">Belongs to the RuvA family.</text>
</comment>
<name>RUVA_CLOBK</name>
<dbReference type="EMBL" id="CP000939">
    <property type="protein sequence ID" value="ACA43686.1"/>
    <property type="molecule type" value="Genomic_DNA"/>
</dbReference>
<dbReference type="RefSeq" id="WP_003357846.1">
    <property type="nucleotide sequence ID" value="NC_010516.1"/>
</dbReference>
<dbReference type="SMR" id="B1IMF4"/>
<dbReference type="KEGG" id="cbb:CLD_1469"/>
<dbReference type="HOGENOM" id="CLU_087936_3_0_9"/>
<dbReference type="Proteomes" id="UP000008541">
    <property type="component" value="Chromosome"/>
</dbReference>
<dbReference type="GO" id="GO:0005737">
    <property type="term" value="C:cytoplasm"/>
    <property type="evidence" value="ECO:0007669"/>
    <property type="project" value="UniProtKB-SubCell"/>
</dbReference>
<dbReference type="GO" id="GO:0009379">
    <property type="term" value="C:Holliday junction helicase complex"/>
    <property type="evidence" value="ECO:0007669"/>
    <property type="project" value="InterPro"/>
</dbReference>
<dbReference type="GO" id="GO:0048476">
    <property type="term" value="C:Holliday junction resolvase complex"/>
    <property type="evidence" value="ECO:0007669"/>
    <property type="project" value="UniProtKB-UniRule"/>
</dbReference>
<dbReference type="GO" id="GO:0005524">
    <property type="term" value="F:ATP binding"/>
    <property type="evidence" value="ECO:0007669"/>
    <property type="project" value="InterPro"/>
</dbReference>
<dbReference type="GO" id="GO:0000400">
    <property type="term" value="F:four-way junction DNA binding"/>
    <property type="evidence" value="ECO:0007669"/>
    <property type="project" value="UniProtKB-UniRule"/>
</dbReference>
<dbReference type="GO" id="GO:0009378">
    <property type="term" value="F:four-way junction helicase activity"/>
    <property type="evidence" value="ECO:0007669"/>
    <property type="project" value="InterPro"/>
</dbReference>
<dbReference type="GO" id="GO:0006310">
    <property type="term" value="P:DNA recombination"/>
    <property type="evidence" value="ECO:0007669"/>
    <property type="project" value="UniProtKB-UniRule"/>
</dbReference>
<dbReference type="GO" id="GO:0006281">
    <property type="term" value="P:DNA repair"/>
    <property type="evidence" value="ECO:0007669"/>
    <property type="project" value="UniProtKB-UniRule"/>
</dbReference>
<dbReference type="CDD" id="cd14332">
    <property type="entry name" value="UBA_RuvA_C"/>
    <property type="match status" value="1"/>
</dbReference>
<dbReference type="Gene3D" id="1.10.150.20">
    <property type="entry name" value="5' to 3' exonuclease, C-terminal subdomain"/>
    <property type="match status" value="1"/>
</dbReference>
<dbReference type="Gene3D" id="1.10.8.10">
    <property type="entry name" value="DNA helicase RuvA subunit, C-terminal domain"/>
    <property type="match status" value="1"/>
</dbReference>
<dbReference type="Gene3D" id="2.40.50.140">
    <property type="entry name" value="Nucleic acid-binding proteins"/>
    <property type="match status" value="1"/>
</dbReference>
<dbReference type="HAMAP" id="MF_00031">
    <property type="entry name" value="DNA_HJ_migration_RuvA"/>
    <property type="match status" value="1"/>
</dbReference>
<dbReference type="InterPro" id="IPR013849">
    <property type="entry name" value="DNA_helicase_Holl-junc_RuvA_I"/>
</dbReference>
<dbReference type="InterPro" id="IPR012340">
    <property type="entry name" value="NA-bd_OB-fold"/>
</dbReference>
<dbReference type="InterPro" id="IPR000085">
    <property type="entry name" value="RuvA"/>
</dbReference>
<dbReference type="InterPro" id="IPR010994">
    <property type="entry name" value="RuvA_2-like"/>
</dbReference>
<dbReference type="InterPro" id="IPR011114">
    <property type="entry name" value="RuvA_C"/>
</dbReference>
<dbReference type="InterPro" id="IPR036267">
    <property type="entry name" value="RuvA_C_sf"/>
</dbReference>
<dbReference type="NCBIfam" id="TIGR00084">
    <property type="entry name" value="ruvA"/>
    <property type="match status" value="1"/>
</dbReference>
<dbReference type="Pfam" id="PF14520">
    <property type="entry name" value="HHH_5"/>
    <property type="match status" value="1"/>
</dbReference>
<dbReference type="Pfam" id="PF07499">
    <property type="entry name" value="RuvA_C"/>
    <property type="match status" value="1"/>
</dbReference>
<dbReference type="Pfam" id="PF01330">
    <property type="entry name" value="RuvA_N"/>
    <property type="match status" value="1"/>
</dbReference>
<dbReference type="SUPFAM" id="SSF46929">
    <property type="entry name" value="DNA helicase RuvA subunit, C-terminal domain"/>
    <property type="match status" value="1"/>
</dbReference>
<dbReference type="SUPFAM" id="SSF50249">
    <property type="entry name" value="Nucleic acid-binding proteins"/>
    <property type="match status" value="1"/>
</dbReference>
<dbReference type="SUPFAM" id="SSF47781">
    <property type="entry name" value="RuvA domain 2-like"/>
    <property type="match status" value="1"/>
</dbReference>
<feature type="chain" id="PRO_1000090304" description="Holliday junction branch migration complex subunit RuvA">
    <location>
        <begin position="1"/>
        <end position="197"/>
    </location>
</feature>
<feature type="region of interest" description="Domain I" evidence="1">
    <location>
        <begin position="1"/>
        <end position="64"/>
    </location>
</feature>
<feature type="region of interest" description="Domain II" evidence="1">
    <location>
        <begin position="65"/>
        <end position="144"/>
    </location>
</feature>
<feature type="region of interest" description="Flexible linker" evidence="1">
    <location>
        <begin position="145"/>
        <end position="149"/>
    </location>
</feature>
<feature type="region of interest" description="Domain III" evidence="1">
    <location>
        <begin position="149"/>
        <end position="197"/>
    </location>
</feature>
<keyword id="KW-0963">Cytoplasm</keyword>
<keyword id="KW-0227">DNA damage</keyword>
<keyword id="KW-0233">DNA recombination</keyword>
<keyword id="KW-0234">DNA repair</keyword>
<keyword id="KW-0238">DNA-binding</keyword>
<reference key="1">
    <citation type="journal article" date="2007" name="PLoS ONE">
        <title>Analysis of the neurotoxin complex genes in Clostridium botulinum A1-A4 and B1 strains: BoNT/A3, /Ba4 and /B1 clusters are located within plasmids.</title>
        <authorList>
            <person name="Smith T.J."/>
            <person name="Hill K.K."/>
            <person name="Foley B.T."/>
            <person name="Detter J.C."/>
            <person name="Munk A.C."/>
            <person name="Bruce D.C."/>
            <person name="Doggett N.A."/>
            <person name="Smith L.A."/>
            <person name="Marks J.D."/>
            <person name="Xie G."/>
            <person name="Brettin T.S."/>
        </authorList>
    </citation>
    <scope>NUCLEOTIDE SEQUENCE [LARGE SCALE GENOMIC DNA]</scope>
    <source>
        <strain>Okra / Type B1</strain>
    </source>
</reference>